<comment type="function">
    <text>Probably involved in the defense reaction of plants against pathogens.</text>
</comment>
<comment type="developmental stage">
    <text>Maximum expression found during days 4 to 8 and days 8 to 12 after inoculation with an avirulent and a virulent pathogen respectively.</text>
</comment>
<comment type="induction">
    <text>Upon infection by virulent and avirulent races of pathogens, for example fungal pathogen C.fulvum.</text>
</comment>
<comment type="similarity">
    <text evidence="2">Belongs to the CRISP family.</text>
</comment>
<keyword id="KW-1015">Disulfide bond</keyword>
<keyword id="KW-0568">Pathogenesis-related protein</keyword>
<keyword id="KW-0611">Plant defense</keyword>
<keyword id="KW-0873">Pyrrolidone carboxylic acid</keyword>
<keyword id="KW-1185">Reference proteome</keyword>
<keyword id="KW-0732">Signal</keyword>
<reference key="1">
    <citation type="journal article" date="1992" name="Plant Mol. Biol.">
        <title>Differential accumulation of mRNAs encoding extracellular and intracellular PR proteins in tomato induced by virulent and avirulent races of Cladosporium fulvum.</title>
        <authorList>
            <person name="van Kan J.A.L."/>
            <person name="Joosten M.H.A.J."/>
            <person name="Wagemakers C.A.M."/>
            <person name="van den Berg-Velthuis G.C.M."/>
            <person name="de Wit P.J.G.M."/>
        </authorList>
    </citation>
    <scope>NUCLEOTIDE SEQUENCE [MRNA]</scope>
    <source>
        <strain>cv. Moneymaker</strain>
        <tissue>Leaf</tissue>
    </source>
</reference>
<dbReference type="EMBL" id="M69247">
    <property type="protein sequence ID" value="AAA03615.1"/>
    <property type="molecule type" value="mRNA"/>
</dbReference>
<dbReference type="PIR" id="S26238">
    <property type="entry name" value="S26238"/>
</dbReference>
<dbReference type="RefSeq" id="NP_001234523.1">
    <property type="nucleotide sequence ID" value="NM_001247594.2"/>
</dbReference>
<dbReference type="SMR" id="Q04108"/>
<dbReference type="FunCoup" id="Q04108">
    <property type="interactions" value="533"/>
</dbReference>
<dbReference type="STRING" id="4081.Q04108"/>
<dbReference type="PaxDb" id="4081-Solyc09g007010.1.1"/>
<dbReference type="GeneID" id="544185"/>
<dbReference type="eggNOG" id="KOG3017">
    <property type="taxonomic scope" value="Eukaryota"/>
</dbReference>
<dbReference type="HOGENOM" id="CLU_035730_8_1_1"/>
<dbReference type="InParanoid" id="Q04108"/>
<dbReference type="OrthoDB" id="337038at2759"/>
<dbReference type="PhylomeDB" id="Q04108"/>
<dbReference type="Proteomes" id="UP000004994">
    <property type="component" value="Unplaced"/>
</dbReference>
<dbReference type="ExpressionAtlas" id="Q04108">
    <property type="expression patterns" value="baseline and differential"/>
</dbReference>
<dbReference type="GO" id="GO:0005615">
    <property type="term" value="C:extracellular space"/>
    <property type="evidence" value="ECO:0000318"/>
    <property type="project" value="GO_Central"/>
</dbReference>
<dbReference type="GO" id="GO:0006952">
    <property type="term" value="P:defense response"/>
    <property type="evidence" value="ECO:0007669"/>
    <property type="project" value="UniProtKB-KW"/>
</dbReference>
<dbReference type="GO" id="GO:0019953">
    <property type="term" value="P:sexual reproduction"/>
    <property type="evidence" value="ECO:0000318"/>
    <property type="project" value="GO_Central"/>
</dbReference>
<dbReference type="CDD" id="cd05381">
    <property type="entry name" value="CAP_PR-1"/>
    <property type="match status" value="1"/>
</dbReference>
<dbReference type="FunFam" id="3.40.33.10:FF:000006">
    <property type="entry name" value="Putative pathogenesis-related protein 1"/>
    <property type="match status" value="1"/>
</dbReference>
<dbReference type="Gene3D" id="3.40.33.10">
    <property type="entry name" value="CAP"/>
    <property type="match status" value="1"/>
</dbReference>
<dbReference type="InterPro" id="IPR018244">
    <property type="entry name" value="Allrgn_V5/Tpx1_CS"/>
</dbReference>
<dbReference type="InterPro" id="IPR014044">
    <property type="entry name" value="CAP_dom"/>
</dbReference>
<dbReference type="InterPro" id="IPR035940">
    <property type="entry name" value="CAP_sf"/>
</dbReference>
<dbReference type="InterPro" id="IPR001283">
    <property type="entry name" value="CRISP-related"/>
</dbReference>
<dbReference type="PANTHER" id="PTHR10334">
    <property type="entry name" value="CYSTEINE-RICH SECRETORY PROTEIN-RELATED"/>
    <property type="match status" value="1"/>
</dbReference>
<dbReference type="Pfam" id="PF00188">
    <property type="entry name" value="CAP"/>
    <property type="match status" value="1"/>
</dbReference>
<dbReference type="PRINTS" id="PR00837">
    <property type="entry name" value="V5TPXLIKE"/>
</dbReference>
<dbReference type="SMART" id="SM00198">
    <property type="entry name" value="SCP"/>
    <property type="match status" value="1"/>
</dbReference>
<dbReference type="SUPFAM" id="SSF55797">
    <property type="entry name" value="PR-1-like"/>
    <property type="match status" value="1"/>
</dbReference>
<dbReference type="PROSITE" id="PS01009">
    <property type="entry name" value="CRISP_1"/>
    <property type="match status" value="1"/>
</dbReference>
<dbReference type="PROSITE" id="PS01010">
    <property type="entry name" value="CRISP_2"/>
    <property type="match status" value="1"/>
</dbReference>
<sequence length="159" mass="17439">MGLFNISLLLTCLMVLAIFHSCEAQNSPQDYLAVHNDARAQVGVGPMSWDANLASRAQNYANSRAGDCNLIHSGAGENLAKGGGDFTGRAAVQLWVSERPDYNYATNQCVGGKMCGHYTQVVWRNSVRLGCGRARCNNGWWFISCNYDPVGNWVGERPY</sequence>
<feature type="signal peptide" evidence="1">
    <location>
        <begin position="1"/>
        <end position="24"/>
    </location>
</feature>
<feature type="chain" id="PRO_0000006308" description="Pathogenesis-related leaf protein 4">
    <location>
        <begin position="25"/>
        <end position="159"/>
    </location>
</feature>
<feature type="domain" description="SCP">
    <location>
        <begin position="32"/>
        <end position="147"/>
    </location>
</feature>
<feature type="modified residue" description="Pyrrolidone carboxylic acid" evidence="1">
    <location>
        <position position="25"/>
    </location>
</feature>
<feature type="disulfide bond" evidence="1">
    <location>
        <begin position="68"/>
        <end position="136"/>
    </location>
</feature>
<feature type="disulfide bond" evidence="1">
    <location>
        <begin position="109"/>
        <end position="115"/>
    </location>
</feature>
<feature type="disulfide bond" evidence="1">
    <location>
        <begin position="131"/>
        <end position="145"/>
    </location>
</feature>
<name>PR04_SOLLC</name>
<accession>Q04108</accession>
<proteinExistence type="evidence at transcript level"/>
<protein>
    <recommendedName>
        <fullName>Pathogenesis-related leaf protein 4</fullName>
        <shortName>P4</shortName>
    </recommendedName>
</protein>
<evidence type="ECO:0000250" key="1"/>
<evidence type="ECO:0000305" key="2"/>
<organism>
    <name type="scientific">Solanum lycopersicum</name>
    <name type="common">Tomato</name>
    <name type="synonym">Lycopersicon esculentum</name>
    <dbReference type="NCBI Taxonomy" id="4081"/>
    <lineage>
        <taxon>Eukaryota</taxon>
        <taxon>Viridiplantae</taxon>
        <taxon>Streptophyta</taxon>
        <taxon>Embryophyta</taxon>
        <taxon>Tracheophyta</taxon>
        <taxon>Spermatophyta</taxon>
        <taxon>Magnoliopsida</taxon>
        <taxon>eudicotyledons</taxon>
        <taxon>Gunneridae</taxon>
        <taxon>Pentapetalae</taxon>
        <taxon>asterids</taxon>
        <taxon>lamiids</taxon>
        <taxon>Solanales</taxon>
        <taxon>Solanaceae</taxon>
        <taxon>Solanoideae</taxon>
        <taxon>Solaneae</taxon>
        <taxon>Solanum</taxon>
        <taxon>Solanum subgen. Lycopersicon</taxon>
    </lineage>
</organism>